<keyword id="KW-0025">Alternative splicing</keyword>
<keyword id="KW-0050">Antiport</keyword>
<keyword id="KW-0150">Chloroplast</keyword>
<keyword id="KW-0256">Endoplasmic reticulum</keyword>
<keyword id="KW-0406">Ion transport</keyword>
<keyword id="KW-0472">Membrane</keyword>
<keyword id="KW-0934">Plastid</keyword>
<keyword id="KW-0630">Potassium</keyword>
<keyword id="KW-0633">Potassium transport</keyword>
<keyword id="KW-1185">Reference proteome</keyword>
<keyword id="KW-0812">Transmembrane</keyword>
<keyword id="KW-1133">Transmembrane helix</keyword>
<keyword id="KW-0813">Transport</keyword>
<sequence>MSSGAPLNVTNPNYDIEESRFGKIVCYDQSLLFEKREQKGWESGSTLASSLPFFITQLFVANLSYRVLYYLTRPLYLPPFVAQILCGLLFSPSVLGNTRFIIAHVFPYRFTMVLETFANLALVYNIFLLGLGMDLRMVRITELKPVIIAFTGLLVALPVGAFLYYLPGNGHPDKIISGCVFWSVALACTNFPDLARILADLKLLRSDMGRTAMCAAIVTDLCTWVLLVFGFASFSKSGTWNKMMPFVIITTAIFVLLCIFVIRPGIAWIFAKTVKAGHVGDTHVWFILGGVVLCGLITDACGVHSITGAFLFGLSIPHDHIIRNMIEEKLHDFLSGILMPLFYIICGLRADIGFMLQFTDKFMMVVVICSSFLVKIVTTVITSLFMHIPMRDAFAIGALMNTKGTLSLVVLNAGRDTKALDSPMYTHMTIALLVMSLVVEPLLAFAYKPKKKLAHYKHRTVQKIKGETELRVLACVHVLPNVSGITNLLQVSNATKQSPLSVFAIHLVELTGRTTASLLIMNDECKPKANFSDRVRAESDQIAETFEAMEVNNDAMTVQTITAVSPYATMHEDICVLAEDKRVCFIILPYHKHLTPDGRMGEGNSSHAEINQNVLSHAPCSVGILVDRGMAMVRSESFRGESMKREVAMLFVGGPDDREALSYAWRMVGQHVIKLTVVRFVPGREALISSGKVAAEYEREKQVDDECIYEFNFKTMNDSSVKYIEKVVNDGQDTIATIREMEDNNSYDLYVVGRGYNSDSPVTAGLNDWSSSPELGTIGDTLASSNFTMHASVLVIQQYSATKRQAAVTAAAATTVMGAVAGVTGNNLESAGGDAKMTRDAHEPFMKSMYEDEDEDDEEDHQYGIHR</sequence>
<organism>
    <name type="scientific">Arabidopsis thaliana</name>
    <name type="common">Mouse-ear cress</name>
    <dbReference type="NCBI Taxonomy" id="3702"/>
    <lineage>
        <taxon>Eukaryota</taxon>
        <taxon>Viridiplantae</taxon>
        <taxon>Streptophyta</taxon>
        <taxon>Embryophyta</taxon>
        <taxon>Tracheophyta</taxon>
        <taxon>Spermatophyta</taxon>
        <taxon>Magnoliopsida</taxon>
        <taxon>eudicotyledons</taxon>
        <taxon>Gunneridae</taxon>
        <taxon>Pentapetalae</taxon>
        <taxon>rosids</taxon>
        <taxon>malvids</taxon>
        <taxon>Brassicales</taxon>
        <taxon>Brassicaceae</taxon>
        <taxon>Camelineae</taxon>
        <taxon>Arabidopsis</taxon>
    </lineage>
</organism>
<proteinExistence type="evidence at protein level"/>
<accession>Q8VYD4</accession>
<accession>Q2V4Q6</accession>
<accession>Q58P62</accession>
<accession>Q9SYJ9</accession>
<comment type="function">
    <text evidence="3 5">Operates as a K(+)/H(+) antiporter or Na(+)/H(+) antiporter of the chloroplast envelope that functions in pH homeostasis and chloroplast development. Monovalent cation transporter with a preference for Cs(+), K(+) and Rb(+) relative to Na(+) or Li(+). Required for pollen tube guidance, but not for normal pollen development. May also be involved in the development or function of the female gametophyte.</text>
</comment>
<comment type="subcellular location">
    <subcellularLocation>
        <location>Plastid</location>
        <location>Chloroplast membrane</location>
        <topology>Multi-pass membrane protein</topology>
    </subcellularLocation>
    <subcellularLocation>
        <location>Endoplasmic reticulum membrane</location>
        <topology>Multi-pass membrane protein</topology>
    </subcellularLocation>
    <text>PubMed:15220473 shows a localization in chloroplasts while PubMed:21239645 shows a localization in ER.</text>
</comment>
<comment type="alternative products">
    <event type="alternative splicing"/>
    <isoform>
        <id>Q8VYD4-1</id>
        <name>1</name>
        <sequence type="displayed"/>
    </isoform>
    <isoform>
        <id>Q8VYD4-2</id>
        <name>2</name>
        <sequence type="described" ref="VSP_039315"/>
    </isoform>
</comment>
<comment type="tissue specificity">
    <text evidence="3 4 5">Specifically expressed in flower buds and pollen. Expressed in leaves, roots and stems (PubMed:15220473).</text>
</comment>
<comment type="disruption phenotype">
    <text evidence="3 5">Mutants with impaired chloroplast development that display aberrant chloroplast structure (PubMed:15220473). No defect in male fertility, due to redundancy with CHX21. Chx21 and chx23 double mutants are male sterile (PubMed:21239645).</text>
</comment>
<comment type="similarity">
    <text evidence="6">Belongs to the monovalent cation:proton antiporter 2 (CPA2) transporter (TC 2.A.37) family. CHX (TC 2.A.37.4) subfamily.</text>
</comment>
<comment type="caution">
    <text evidence="7">The article by Evans et al was retracted by the editors due to concerns over image manipulation, which raised sufficient doubts regarding the credibility of the study.</text>
</comment>
<comment type="sequence caution" evidence="6">
    <conflict type="erroneous gene model prediction">
        <sequence resource="EMBL-CDS" id="AAD30610"/>
    </conflict>
</comment>
<dbReference type="EMBL" id="AY072159">
    <property type="protein sequence ID" value="AAL59981.1"/>
    <property type="molecule type" value="mRNA"/>
</dbReference>
<dbReference type="EMBL" id="AY096415">
    <property type="protein sequence ID" value="AAM20055.1"/>
    <property type="molecule type" value="mRNA"/>
</dbReference>
<dbReference type="EMBL" id="AC007153">
    <property type="protein sequence ID" value="AAD30610.1"/>
    <property type="status" value="ALT_SEQ"/>
    <property type="molecule type" value="Genomic_DNA"/>
</dbReference>
<dbReference type="EMBL" id="CP002684">
    <property type="protein sequence ID" value="AEE27859.1"/>
    <property type="molecule type" value="Genomic_DNA"/>
</dbReference>
<dbReference type="EMBL" id="CP002684">
    <property type="protein sequence ID" value="AEE27860.1"/>
    <property type="molecule type" value="Genomic_DNA"/>
</dbReference>
<dbReference type="EMBL" id="AY926477">
    <property type="protein sequence ID" value="AAX49549.1"/>
    <property type="molecule type" value="mRNA"/>
</dbReference>
<dbReference type="PIR" id="G86189">
    <property type="entry name" value="G86189"/>
</dbReference>
<dbReference type="RefSeq" id="NP_001030975.1">
    <molecule id="Q8VYD4-2"/>
    <property type="nucleotide sequence ID" value="NM_001035898.1"/>
</dbReference>
<dbReference type="RefSeq" id="NP_172049.2">
    <molecule id="Q8VYD4-1"/>
    <property type="nucleotide sequence ID" value="NM_100438.5"/>
</dbReference>
<dbReference type="SMR" id="Q8VYD4"/>
<dbReference type="BioGRID" id="22305">
    <property type="interactions" value="1"/>
</dbReference>
<dbReference type="FunCoup" id="Q8VYD4">
    <property type="interactions" value="45"/>
</dbReference>
<dbReference type="IntAct" id="Q8VYD4">
    <property type="interactions" value="1"/>
</dbReference>
<dbReference type="STRING" id="3702.Q8VYD4"/>
<dbReference type="TCDB" id="2.A.37.4.5">
    <property type="family name" value="the monovalent cation:proton antiporter-2 (cpa2) family"/>
</dbReference>
<dbReference type="GlyGen" id="Q8VYD4">
    <property type="glycosylation" value="1 site"/>
</dbReference>
<dbReference type="PaxDb" id="3702-AT1G05580.1"/>
<dbReference type="ProteomicsDB" id="246920">
    <molecule id="Q8VYD4-1"/>
</dbReference>
<dbReference type="EnsemblPlants" id="AT1G05580.1">
    <molecule id="Q8VYD4-1"/>
    <property type="protein sequence ID" value="AT1G05580.1"/>
    <property type="gene ID" value="AT1G05580"/>
</dbReference>
<dbReference type="EnsemblPlants" id="AT1G05580.2">
    <molecule id="Q8VYD4-2"/>
    <property type="protein sequence ID" value="AT1G05580.2"/>
    <property type="gene ID" value="AT1G05580"/>
</dbReference>
<dbReference type="GeneID" id="837063"/>
<dbReference type="Gramene" id="AT1G05580.1">
    <molecule id="Q8VYD4-1"/>
    <property type="protein sequence ID" value="AT1G05580.1"/>
    <property type="gene ID" value="AT1G05580"/>
</dbReference>
<dbReference type="Gramene" id="AT1G05580.2">
    <molecule id="Q8VYD4-2"/>
    <property type="protein sequence ID" value="AT1G05580.2"/>
    <property type="gene ID" value="AT1G05580"/>
</dbReference>
<dbReference type="KEGG" id="ath:AT1G05580"/>
<dbReference type="Araport" id="AT1G05580"/>
<dbReference type="TAIR" id="AT1G05580">
    <property type="gene designation" value="CHX23"/>
</dbReference>
<dbReference type="eggNOG" id="KOG1650">
    <property type="taxonomic scope" value="Eukaryota"/>
</dbReference>
<dbReference type="InParanoid" id="Q8VYD4"/>
<dbReference type="OMA" id="ENTPWEM"/>
<dbReference type="PhylomeDB" id="Q8VYD4"/>
<dbReference type="PRO" id="PR:Q8VYD4"/>
<dbReference type="Proteomes" id="UP000006548">
    <property type="component" value="Chromosome 1"/>
</dbReference>
<dbReference type="ExpressionAtlas" id="Q8VYD4">
    <property type="expression patterns" value="baseline and differential"/>
</dbReference>
<dbReference type="GO" id="GO:0031969">
    <property type="term" value="C:chloroplast membrane"/>
    <property type="evidence" value="ECO:0007669"/>
    <property type="project" value="UniProtKB-SubCell"/>
</dbReference>
<dbReference type="GO" id="GO:0005783">
    <property type="term" value="C:endoplasmic reticulum"/>
    <property type="evidence" value="ECO:0000314"/>
    <property type="project" value="TAIR"/>
</dbReference>
<dbReference type="GO" id="GO:0005789">
    <property type="term" value="C:endoplasmic reticulum membrane"/>
    <property type="evidence" value="ECO:0007669"/>
    <property type="project" value="UniProtKB-SubCell"/>
</dbReference>
<dbReference type="GO" id="GO:0015297">
    <property type="term" value="F:antiporter activity"/>
    <property type="evidence" value="ECO:0007669"/>
    <property type="project" value="UniProtKB-KW"/>
</dbReference>
<dbReference type="GO" id="GO:0010183">
    <property type="term" value="P:pollen tube guidance"/>
    <property type="evidence" value="ECO:0000316"/>
    <property type="project" value="TAIR"/>
</dbReference>
<dbReference type="GO" id="GO:0071805">
    <property type="term" value="P:potassium ion transmembrane transport"/>
    <property type="evidence" value="ECO:0000314"/>
    <property type="project" value="TAIR"/>
</dbReference>
<dbReference type="GO" id="GO:1902600">
    <property type="term" value="P:proton transmembrane transport"/>
    <property type="evidence" value="ECO:0007669"/>
    <property type="project" value="InterPro"/>
</dbReference>
<dbReference type="Gene3D" id="1.20.1530.20">
    <property type="match status" value="1"/>
</dbReference>
<dbReference type="Gene3D" id="3.40.50.12370">
    <property type="match status" value="1"/>
</dbReference>
<dbReference type="InterPro" id="IPR006153">
    <property type="entry name" value="Cation/H_exchanger_TM"/>
</dbReference>
<dbReference type="InterPro" id="IPR050794">
    <property type="entry name" value="CPA2_transporter"/>
</dbReference>
<dbReference type="InterPro" id="IPR038770">
    <property type="entry name" value="Na+/solute_symporter_sf"/>
</dbReference>
<dbReference type="PANTHER" id="PTHR32468">
    <property type="entry name" value="CATION/H + ANTIPORTER"/>
    <property type="match status" value="1"/>
</dbReference>
<dbReference type="PANTHER" id="PTHR32468:SF74">
    <property type="entry name" value="CATION_H(+) ANTIPORTER 21-RELATED"/>
    <property type="match status" value="1"/>
</dbReference>
<dbReference type="Pfam" id="PF23256">
    <property type="entry name" value="CHX17_2nd"/>
    <property type="match status" value="1"/>
</dbReference>
<dbReference type="Pfam" id="PF23259">
    <property type="entry name" value="CHX17_C"/>
    <property type="match status" value="1"/>
</dbReference>
<dbReference type="Pfam" id="PF00999">
    <property type="entry name" value="Na_H_Exchanger"/>
    <property type="match status" value="1"/>
</dbReference>
<evidence type="ECO:0000255" key="1"/>
<evidence type="ECO:0000256" key="2">
    <source>
        <dbReference type="SAM" id="MobiDB-lite"/>
    </source>
</evidence>
<evidence type="ECO:0000269" key="3">
    <source>
    </source>
</evidence>
<evidence type="ECO:0000269" key="4">
    <source>
    </source>
</evidence>
<evidence type="ECO:0000269" key="5">
    <source>
    </source>
</evidence>
<evidence type="ECO:0000305" key="6"/>
<evidence type="ECO:0000305" key="7">
    <source>
    </source>
</evidence>
<gene>
    <name type="primary">CHX23</name>
    <name type="ordered locus">At1g05580</name>
    <name type="ORF">F3F20.2</name>
</gene>
<reference key="1">
    <citation type="journal article" date="2000" name="Nature">
        <title>Sequence and analysis of chromosome 1 of the plant Arabidopsis thaliana.</title>
        <authorList>
            <person name="Theologis A."/>
            <person name="Ecker J.R."/>
            <person name="Palm C.J."/>
            <person name="Federspiel N.A."/>
            <person name="Kaul S."/>
            <person name="White O."/>
            <person name="Alonso J."/>
            <person name="Altafi H."/>
            <person name="Araujo R."/>
            <person name="Bowman C.L."/>
            <person name="Brooks S.Y."/>
            <person name="Buehler E."/>
            <person name="Chan A."/>
            <person name="Chao Q."/>
            <person name="Chen H."/>
            <person name="Cheuk R.F."/>
            <person name="Chin C.W."/>
            <person name="Chung M.K."/>
            <person name="Conn L."/>
            <person name="Conway A.B."/>
            <person name="Conway A.R."/>
            <person name="Creasy T.H."/>
            <person name="Dewar K."/>
            <person name="Dunn P."/>
            <person name="Etgu P."/>
            <person name="Feldblyum T.V."/>
            <person name="Feng J.-D."/>
            <person name="Fong B."/>
            <person name="Fujii C.Y."/>
            <person name="Gill J.E."/>
            <person name="Goldsmith A.D."/>
            <person name="Haas B."/>
            <person name="Hansen N.F."/>
            <person name="Hughes B."/>
            <person name="Huizar L."/>
            <person name="Hunter J.L."/>
            <person name="Jenkins J."/>
            <person name="Johnson-Hopson C."/>
            <person name="Khan S."/>
            <person name="Khaykin E."/>
            <person name="Kim C.J."/>
            <person name="Koo H.L."/>
            <person name="Kremenetskaia I."/>
            <person name="Kurtz D.B."/>
            <person name="Kwan A."/>
            <person name="Lam B."/>
            <person name="Langin-Hooper S."/>
            <person name="Lee A."/>
            <person name="Lee J.M."/>
            <person name="Lenz C.A."/>
            <person name="Li J.H."/>
            <person name="Li Y.-P."/>
            <person name="Lin X."/>
            <person name="Liu S.X."/>
            <person name="Liu Z.A."/>
            <person name="Luros J.S."/>
            <person name="Maiti R."/>
            <person name="Marziali A."/>
            <person name="Militscher J."/>
            <person name="Miranda M."/>
            <person name="Nguyen M."/>
            <person name="Nierman W.C."/>
            <person name="Osborne B.I."/>
            <person name="Pai G."/>
            <person name="Peterson J."/>
            <person name="Pham P.K."/>
            <person name="Rizzo M."/>
            <person name="Rooney T."/>
            <person name="Rowley D."/>
            <person name="Sakano H."/>
            <person name="Salzberg S.L."/>
            <person name="Schwartz J.R."/>
            <person name="Shinn P."/>
            <person name="Southwick A.M."/>
            <person name="Sun H."/>
            <person name="Tallon L.J."/>
            <person name="Tambunga G."/>
            <person name="Toriumi M.J."/>
            <person name="Town C.D."/>
            <person name="Utterback T."/>
            <person name="Van Aken S."/>
            <person name="Vaysberg M."/>
            <person name="Vysotskaia V.S."/>
            <person name="Walker M."/>
            <person name="Wu D."/>
            <person name="Yu G."/>
            <person name="Fraser C.M."/>
            <person name="Venter J.C."/>
            <person name="Davis R.W."/>
        </authorList>
    </citation>
    <scope>NUCLEOTIDE SEQUENCE [LARGE SCALE GENOMIC DNA]</scope>
    <source>
        <strain>cv. Columbia</strain>
    </source>
</reference>
<reference key="2">
    <citation type="journal article" date="2017" name="Plant J.">
        <title>Araport11: a complete reannotation of the Arabidopsis thaliana reference genome.</title>
        <authorList>
            <person name="Cheng C.Y."/>
            <person name="Krishnakumar V."/>
            <person name="Chan A.P."/>
            <person name="Thibaud-Nissen F."/>
            <person name="Schobel S."/>
            <person name="Town C.D."/>
        </authorList>
    </citation>
    <scope>GENOME REANNOTATION</scope>
    <source>
        <strain>cv. Columbia</strain>
    </source>
</reference>
<reference key="3">
    <citation type="journal article" date="2003" name="Science">
        <title>Empirical analysis of transcriptional activity in the Arabidopsis genome.</title>
        <authorList>
            <person name="Yamada K."/>
            <person name="Lim J."/>
            <person name="Dale J.M."/>
            <person name="Chen H."/>
            <person name="Shinn P."/>
            <person name="Palm C.J."/>
            <person name="Southwick A.M."/>
            <person name="Wu H.C."/>
            <person name="Kim C.J."/>
            <person name="Nguyen M."/>
            <person name="Pham P.K."/>
            <person name="Cheuk R.F."/>
            <person name="Karlin-Newmann G."/>
            <person name="Liu S.X."/>
            <person name="Lam B."/>
            <person name="Sakano H."/>
            <person name="Wu T."/>
            <person name="Yu G."/>
            <person name="Miranda M."/>
            <person name="Quach H.L."/>
            <person name="Tripp M."/>
            <person name="Chang C.H."/>
            <person name="Lee J.M."/>
            <person name="Toriumi M.J."/>
            <person name="Chan M.M."/>
            <person name="Tang C.C."/>
            <person name="Onodera C.S."/>
            <person name="Deng J.M."/>
            <person name="Akiyama K."/>
            <person name="Ansari Y."/>
            <person name="Arakawa T."/>
            <person name="Banh J."/>
            <person name="Banno F."/>
            <person name="Bowser L."/>
            <person name="Brooks S.Y."/>
            <person name="Carninci P."/>
            <person name="Chao Q."/>
            <person name="Choy N."/>
            <person name="Enju A."/>
            <person name="Goldsmith A.D."/>
            <person name="Gurjal M."/>
            <person name="Hansen N.F."/>
            <person name="Hayashizaki Y."/>
            <person name="Johnson-Hopson C."/>
            <person name="Hsuan V.W."/>
            <person name="Iida K."/>
            <person name="Karnes M."/>
            <person name="Khan S."/>
            <person name="Koesema E."/>
            <person name="Ishida J."/>
            <person name="Jiang P.X."/>
            <person name="Jones T."/>
            <person name="Kawai J."/>
            <person name="Kamiya A."/>
            <person name="Meyers C."/>
            <person name="Nakajima M."/>
            <person name="Narusaka M."/>
            <person name="Seki M."/>
            <person name="Sakurai T."/>
            <person name="Satou M."/>
            <person name="Tamse R."/>
            <person name="Vaysberg M."/>
            <person name="Wallender E.K."/>
            <person name="Wong C."/>
            <person name="Yamamura Y."/>
            <person name="Yuan S."/>
            <person name="Shinozaki K."/>
            <person name="Davis R.W."/>
            <person name="Theologis A."/>
            <person name="Ecker J.R."/>
        </authorList>
    </citation>
    <scope>NUCLEOTIDE SEQUENCE [LARGE SCALE MRNA] (ISOFORM 1)</scope>
    <source>
        <strain>cv. Columbia</strain>
    </source>
</reference>
<reference key="4">
    <citation type="journal article" date="2004" name="Plant Physiol.">
        <title>Expression patterns of a novel AtCHX gene family highlight potential roles in osmotic adjustment and K+ homeostasis in pollen development.</title>
        <authorList>
            <person name="Sze H."/>
            <person name="Padmanaban S."/>
            <person name="Cellier F."/>
            <person name="Honys D."/>
            <person name="Cheng N.-H."/>
            <person name="Bock K.W."/>
            <person name="Conejero G."/>
            <person name="Li X."/>
            <person name="Twell D."/>
            <person name="Ward J.M."/>
            <person name="Hirschi K.D."/>
        </authorList>
    </citation>
    <scope>NUCLEOTIDE SEQUENCE [MRNA] OF 1-859 (ISOFORM 1)</scope>
    <scope>TISSUE SPECIFICITY</scope>
    <scope>GENE FAMILY</scope>
    <scope>NOMENCLATURE</scope>
    <source>
        <tissue>Pollen</tissue>
    </source>
</reference>
<reference key="5">
    <citation type="journal article" date="2001" name="Plant Physiol.">
        <title>Phylogenetic relationships within cation transporter families of Arabidopsis.</title>
        <authorList>
            <person name="Maeser P."/>
            <person name="Thomine S."/>
            <person name="Schroeder J.I."/>
            <person name="Ward J.M."/>
            <person name="Hirschi K."/>
            <person name="Sze H."/>
            <person name="Talke I.N."/>
            <person name="Amtmann A."/>
            <person name="Maathuis F.J.M."/>
            <person name="Sanders D."/>
            <person name="Harper J.F."/>
            <person name="Tchieu J."/>
            <person name="Gribskov M."/>
            <person name="Persans M.W."/>
            <person name="Salt D.E."/>
            <person name="Kim S.A."/>
            <person name="Guerinot M.L."/>
        </authorList>
    </citation>
    <scope>GENE FAMILY</scope>
    <scope>NOMENCLATURE</scope>
</reference>
<reference key="6">
    <citation type="journal article" date="2004" name="Proc. Natl. Acad. Sci. U.S.A.">
        <title>A probable Na+(K+)/H+ exchanger on the chloroplast envelope functions in pH homeostasis and chloroplast development in Arabidopsis thaliana.</title>
        <authorList>
            <person name="Song C.P."/>
            <person name="Guo Y."/>
            <person name="Qiu Q."/>
            <person name="Lambert G."/>
            <person name="Galbraith D.W."/>
            <person name="Jagendorf A."/>
            <person name="Zhu J.K."/>
        </authorList>
    </citation>
    <scope>FUNCTION</scope>
    <scope>SUBCELLULAR LOCATION</scope>
    <scope>TISSUE SPECIFICITY</scope>
    <scope>DISRUPTION PHENOTYPE</scope>
    <scope>MUTAGENESIS OF PRO-761</scope>
</reference>
<reference key="7">
    <citation type="journal article" date="2011" name="Plant Cell">
        <title>Pollen tubes lacking a pair of K+ transporters fail to target ovules in Arabidopsis.</title>
        <authorList>
            <person name="Lu Y."/>
            <person name="Chanroj S."/>
            <person name="Zulkifli L."/>
            <person name="Johnson M.A."/>
            <person name="Uozumi N."/>
            <person name="Cheung A."/>
            <person name="Sze H."/>
        </authorList>
    </citation>
    <scope>FUNCTION</scope>
    <scope>TISSUE SPECIFICITY</scope>
    <scope>SUBCELLULAR LOCATION</scope>
    <scope>DISRUPTION PHENOTYPE</scope>
    <source>
        <strain>cv. Columbia</strain>
    </source>
</reference>
<reference key="8">
    <citation type="journal article" date="2012" name="J. Exp. Bot.">
        <title>The roles of the cation transporters CHX21 and CHX23 in the development of Arabidopsis thaliana.</title>
        <authorList>
            <person name="Evans A.R."/>
            <person name="Hall D."/>
            <person name="Pritchard J."/>
            <person name="Newbury H.J."/>
        </authorList>
    </citation>
    <scope>RETRACTED PAPER</scope>
</reference>
<reference key="9">
    <citation type="journal article" date="2021" name="J. Exp. Bot.">
        <authorList>
            <person name="Evans A.R."/>
            <person name="Hall D."/>
            <person name="Pritchard J."/>
            <person name="Newbury H.J."/>
        </authorList>
    </citation>
    <scope>RETRACTION NOTICE OF PUBMED:21976771</scope>
</reference>
<name>CHX23_ARATH</name>
<protein>
    <recommendedName>
        <fullName>Cation/H(+) antiporter 23, chloroplastic</fullName>
    </recommendedName>
    <alternativeName>
        <fullName>Protein CATION/H+ EXCHANGER 23</fullName>
        <shortName>AtCHX23</shortName>
    </alternativeName>
</protein>
<feature type="chain" id="PRO_0000394992" description="Cation/H(+) antiporter 23, chloroplastic">
    <location>
        <begin position="1"/>
        <end position="867"/>
    </location>
</feature>
<feature type="transmembrane region" description="Helical" evidence="1">
    <location>
        <begin position="43"/>
        <end position="63"/>
    </location>
</feature>
<feature type="transmembrane region" description="Helical" evidence="1">
    <location>
        <begin position="75"/>
        <end position="95"/>
    </location>
</feature>
<feature type="transmembrane region" description="Helical" evidence="1">
    <location>
        <begin position="112"/>
        <end position="132"/>
    </location>
</feature>
<feature type="transmembrane region" description="Helical" evidence="1">
    <location>
        <begin position="146"/>
        <end position="166"/>
    </location>
</feature>
<feature type="transmembrane region" description="Helical" evidence="1">
    <location>
        <begin position="175"/>
        <end position="195"/>
    </location>
</feature>
<feature type="transmembrane region" description="Helical" evidence="1">
    <location>
        <begin position="212"/>
        <end position="232"/>
    </location>
</feature>
<feature type="transmembrane region" description="Helical" evidence="1">
    <location>
        <begin position="242"/>
        <end position="262"/>
    </location>
</feature>
<feature type="transmembrane region" description="Helical" evidence="1">
    <location>
        <begin position="283"/>
        <end position="303"/>
    </location>
</feature>
<feature type="transmembrane region" description="Helical" evidence="1">
    <location>
        <begin position="336"/>
        <end position="356"/>
    </location>
</feature>
<feature type="transmembrane region" description="Helical" evidence="1">
    <location>
        <begin position="362"/>
        <end position="382"/>
    </location>
</feature>
<feature type="transmembrane region" description="Helical" evidence="1">
    <location>
        <begin position="393"/>
        <end position="413"/>
    </location>
</feature>
<feature type="transmembrane region" description="Helical" evidence="1">
    <location>
        <begin position="427"/>
        <end position="447"/>
    </location>
</feature>
<feature type="region of interest" description="Disordered" evidence="2">
    <location>
        <begin position="848"/>
        <end position="867"/>
    </location>
</feature>
<feature type="compositionally biased region" description="Acidic residues" evidence="2">
    <location>
        <begin position="851"/>
        <end position="860"/>
    </location>
</feature>
<feature type="splice variant" id="VSP_039315" description="In isoform 2." evidence="6">
    <location>
        <begin position="1"/>
        <end position="111"/>
    </location>
</feature>
<feature type="mutagenesis site" description="Disturbs overall chloroplast structure." evidence="3">
    <original>P</original>
    <variation>K</variation>
    <location>
        <position position="761"/>
    </location>
</feature>